<organism>
    <name type="scientific">Bacillus anthracis</name>
    <dbReference type="NCBI Taxonomy" id="1392"/>
    <lineage>
        <taxon>Bacteria</taxon>
        <taxon>Bacillati</taxon>
        <taxon>Bacillota</taxon>
        <taxon>Bacilli</taxon>
        <taxon>Bacillales</taxon>
        <taxon>Bacillaceae</taxon>
        <taxon>Bacillus</taxon>
        <taxon>Bacillus cereus group</taxon>
    </lineage>
</organism>
<protein>
    <recommendedName>
        <fullName evidence="1">Triosephosphate isomerase</fullName>
        <shortName evidence="1">TIM</shortName>
        <shortName evidence="1">TPI</shortName>
        <ecNumber evidence="1">5.3.1.1</ecNumber>
    </recommendedName>
    <alternativeName>
        <fullName evidence="1">Triose-phosphate isomerase</fullName>
    </alternativeName>
</protein>
<proteinExistence type="inferred from homology"/>
<name>TPIS_BACAN</name>
<dbReference type="EC" id="5.3.1.1" evidence="1"/>
<dbReference type="EMBL" id="AE016879">
    <property type="protein sequence ID" value="AAP29026.1"/>
    <property type="molecule type" value="Genomic_DNA"/>
</dbReference>
<dbReference type="EMBL" id="AE017334">
    <property type="protein sequence ID" value="AAT34500.2"/>
    <property type="molecule type" value="Genomic_DNA"/>
</dbReference>
<dbReference type="EMBL" id="AE017225">
    <property type="protein sequence ID" value="AAT57276.1"/>
    <property type="molecule type" value="Genomic_DNA"/>
</dbReference>
<dbReference type="RefSeq" id="NP_847540.1">
    <property type="nucleotide sequence ID" value="NC_003997.3"/>
</dbReference>
<dbReference type="RefSeq" id="WP_001231039.1">
    <property type="nucleotide sequence ID" value="NZ_WXXJ01000012.1"/>
</dbReference>
<dbReference type="RefSeq" id="YP_031226.1">
    <property type="nucleotide sequence ID" value="NC_005945.1"/>
</dbReference>
<dbReference type="SMR" id="Q81X76"/>
<dbReference type="STRING" id="261594.GBAA_5366"/>
<dbReference type="DNASU" id="1084904"/>
<dbReference type="GeneID" id="45024969"/>
<dbReference type="KEGG" id="ban:BA_5366"/>
<dbReference type="KEGG" id="banh:HYU01_26215"/>
<dbReference type="KEGG" id="bar:GBAA_5366"/>
<dbReference type="KEGG" id="bat:BAS4987"/>
<dbReference type="PATRIC" id="fig|198094.11.peg.5325"/>
<dbReference type="eggNOG" id="COG0149">
    <property type="taxonomic scope" value="Bacteria"/>
</dbReference>
<dbReference type="HOGENOM" id="CLU_024251_2_3_9"/>
<dbReference type="OMA" id="NWKMHMT"/>
<dbReference type="OrthoDB" id="9809429at2"/>
<dbReference type="UniPathway" id="UPA00109">
    <property type="reaction ID" value="UER00189"/>
</dbReference>
<dbReference type="UniPathway" id="UPA00138"/>
<dbReference type="Proteomes" id="UP000000427">
    <property type="component" value="Chromosome"/>
</dbReference>
<dbReference type="Proteomes" id="UP000000594">
    <property type="component" value="Chromosome"/>
</dbReference>
<dbReference type="GO" id="GO:0005829">
    <property type="term" value="C:cytosol"/>
    <property type="evidence" value="ECO:0007669"/>
    <property type="project" value="TreeGrafter"/>
</dbReference>
<dbReference type="GO" id="GO:0004807">
    <property type="term" value="F:triose-phosphate isomerase activity"/>
    <property type="evidence" value="ECO:0007669"/>
    <property type="project" value="UniProtKB-UniRule"/>
</dbReference>
<dbReference type="GO" id="GO:0006094">
    <property type="term" value="P:gluconeogenesis"/>
    <property type="evidence" value="ECO:0007669"/>
    <property type="project" value="UniProtKB-UniRule"/>
</dbReference>
<dbReference type="GO" id="GO:0046166">
    <property type="term" value="P:glyceraldehyde-3-phosphate biosynthetic process"/>
    <property type="evidence" value="ECO:0007669"/>
    <property type="project" value="TreeGrafter"/>
</dbReference>
<dbReference type="GO" id="GO:0019563">
    <property type="term" value="P:glycerol catabolic process"/>
    <property type="evidence" value="ECO:0007669"/>
    <property type="project" value="TreeGrafter"/>
</dbReference>
<dbReference type="GO" id="GO:0006096">
    <property type="term" value="P:glycolytic process"/>
    <property type="evidence" value="ECO:0007669"/>
    <property type="project" value="UniProtKB-UniRule"/>
</dbReference>
<dbReference type="CDD" id="cd00311">
    <property type="entry name" value="TIM"/>
    <property type="match status" value="1"/>
</dbReference>
<dbReference type="FunFam" id="3.20.20.70:FF:000016">
    <property type="entry name" value="Triosephosphate isomerase"/>
    <property type="match status" value="1"/>
</dbReference>
<dbReference type="Gene3D" id="3.20.20.70">
    <property type="entry name" value="Aldolase class I"/>
    <property type="match status" value="1"/>
</dbReference>
<dbReference type="HAMAP" id="MF_00147_B">
    <property type="entry name" value="TIM_B"/>
    <property type="match status" value="1"/>
</dbReference>
<dbReference type="InterPro" id="IPR013785">
    <property type="entry name" value="Aldolase_TIM"/>
</dbReference>
<dbReference type="InterPro" id="IPR035990">
    <property type="entry name" value="TIM_sf"/>
</dbReference>
<dbReference type="InterPro" id="IPR022896">
    <property type="entry name" value="TrioseP_Isoase_bac/euk"/>
</dbReference>
<dbReference type="InterPro" id="IPR000652">
    <property type="entry name" value="Triosephosphate_isomerase"/>
</dbReference>
<dbReference type="InterPro" id="IPR020861">
    <property type="entry name" value="Triosephosphate_isomerase_AS"/>
</dbReference>
<dbReference type="NCBIfam" id="TIGR00419">
    <property type="entry name" value="tim"/>
    <property type="match status" value="1"/>
</dbReference>
<dbReference type="PANTHER" id="PTHR21139">
    <property type="entry name" value="TRIOSEPHOSPHATE ISOMERASE"/>
    <property type="match status" value="1"/>
</dbReference>
<dbReference type="PANTHER" id="PTHR21139:SF42">
    <property type="entry name" value="TRIOSEPHOSPHATE ISOMERASE"/>
    <property type="match status" value="1"/>
</dbReference>
<dbReference type="Pfam" id="PF00121">
    <property type="entry name" value="TIM"/>
    <property type="match status" value="1"/>
</dbReference>
<dbReference type="SUPFAM" id="SSF51351">
    <property type="entry name" value="Triosephosphate isomerase (TIM)"/>
    <property type="match status" value="1"/>
</dbReference>
<dbReference type="PROSITE" id="PS00171">
    <property type="entry name" value="TIM_1"/>
    <property type="match status" value="1"/>
</dbReference>
<dbReference type="PROSITE" id="PS51440">
    <property type="entry name" value="TIM_2"/>
    <property type="match status" value="1"/>
</dbReference>
<evidence type="ECO:0000255" key="1">
    <source>
        <dbReference type="HAMAP-Rule" id="MF_00147"/>
    </source>
</evidence>
<comment type="function">
    <text evidence="1">Involved in the gluconeogenesis. Catalyzes stereospecifically the conversion of dihydroxyacetone phosphate (DHAP) to D-glyceraldehyde-3-phosphate (G3P).</text>
</comment>
<comment type="catalytic activity">
    <reaction evidence="1">
        <text>D-glyceraldehyde 3-phosphate = dihydroxyacetone phosphate</text>
        <dbReference type="Rhea" id="RHEA:18585"/>
        <dbReference type="ChEBI" id="CHEBI:57642"/>
        <dbReference type="ChEBI" id="CHEBI:59776"/>
        <dbReference type="EC" id="5.3.1.1"/>
    </reaction>
</comment>
<comment type="pathway">
    <text evidence="1">Carbohydrate biosynthesis; gluconeogenesis.</text>
</comment>
<comment type="pathway">
    <text evidence="1">Carbohydrate degradation; glycolysis; D-glyceraldehyde 3-phosphate from glycerone phosphate: step 1/1.</text>
</comment>
<comment type="subunit">
    <text evidence="1">Homodimer.</text>
</comment>
<comment type="subcellular location">
    <subcellularLocation>
        <location evidence="1">Cytoplasm</location>
    </subcellularLocation>
</comment>
<comment type="similarity">
    <text evidence="1">Belongs to the triosephosphate isomerase family.</text>
</comment>
<sequence>MRKPIIAGNWKMNKTLSEAVSFVEEVKGQIPAASAVDAVVCSPALFLERLVAATEGTDLQVGAQNMHFEKNGAFTGEISPVALSDLKVGYVVLGHSERREMFAETDESVNKKTIAAFEHGLTPIVCCGETLEERESGKTFDLVAGQVTKALAGLTEEQVKATVIAYEPIWAIGTGKSSSSADANEVCAHIRKVVAEVVSPAAAEAVRIQYGGSVKPENIKEYMAQSDIDGALVGGASLEPASFLGLLGAVK</sequence>
<accession>Q81X76</accession>
<accession>Q6HR12</accession>
<accession>Q6KKD1</accession>
<reference key="1">
    <citation type="journal article" date="2003" name="Nature">
        <title>The genome sequence of Bacillus anthracis Ames and comparison to closely related bacteria.</title>
        <authorList>
            <person name="Read T.D."/>
            <person name="Peterson S.N."/>
            <person name="Tourasse N.J."/>
            <person name="Baillie L.W."/>
            <person name="Paulsen I.T."/>
            <person name="Nelson K.E."/>
            <person name="Tettelin H."/>
            <person name="Fouts D.E."/>
            <person name="Eisen J.A."/>
            <person name="Gill S.R."/>
            <person name="Holtzapple E.K."/>
            <person name="Okstad O.A."/>
            <person name="Helgason E."/>
            <person name="Rilstone J."/>
            <person name="Wu M."/>
            <person name="Kolonay J.F."/>
            <person name="Beanan M.J."/>
            <person name="Dodson R.J."/>
            <person name="Brinkac L.M."/>
            <person name="Gwinn M.L."/>
            <person name="DeBoy R.T."/>
            <person name="Madpu R."/>
            <person name="Daugherty S.C."/>
            <person name="Durkin A.S."/>
            <person name="Haft D.H."/>
            <person name="Nelson W.C."/>
            <person name="Peterson J.D."/>
            <person name="Pop M."/>
            <person name="Khouri H.M."/>
            <person name="Radune D."/>
            <person name="Benton J.L."/>
            <person name="Mahamoud Y."/>
            <person name="Jiang L."/>
            <person name="Hance I.R."/>
            <person name="Weidman J.F."/>
            <person name="Berry K.J."/>
            <person name="Plaut R.D."/>
            <person name="Wolf A.M."/>
            <person name="Watkins K.L."/>
            <person name="Nierman W.C."/>
            <person name="Hazen A."/>
            <person name="Cline R.T."/>
            <person name="Redmond C."/>
            <person name="Thwaite J.E."/>
            <person name="White O."/>
            <person name="Salzberg S.L."/>
            <person name="Thomason B."/>
            <person name="Friedlander A.M."/>
            <person name="Koehler T.M."/>
            <person name="Hanna P.C."/>
            <person name="Kolstoe A.-B."/>
            <person name="Fraser C.M."/>
        </authorList>
    </citation>
    <scope>NUCLEOTIDE SEQUENCE [LARGE SCALE GENOMIC DNA]</scope>
    <source>
        <strain>Ames / isolate Porton</strain>
    </source>
</reference>
<reference key="2">
    <citation type="journal article" date="2009" name="J. Bacteriol.">
        <title>The complete genome sequence of Bacillus anthracis Ames 'Ancestor'.</title>
        <authorList>
            <person name="Ravel J."/>
            <person name="Jiang L."/>
            <person name="Stanley S.T."/>
            <person name="Wilson M.R."/>
            <person name="Decker R.S."/>
            <person name="Read T.D."/>
            <person name="Worsham P."/>
            <person name="Keim P.S."/>
            <person name="Salzberg S.L."/>
            <person name="Fraser-Liggett C.M."/>
            <person name="Rasko D.A."/>
        </authorList>
    </citation>
    <scope>NUCLEOTIDE SEQUENCE [LARGE SCALE GENOMIC DNA]</scope>
    <source>
        <strain>Ames ancestor</strain>
    </source>
</reference>
<reference key="3">
    <citation type="submission" date="2004-01" db="EMBL/GenBank/DDBJ databases">
        <title>Complete genome sequence of Bacillus anthracis Sterne.</title>
        <authorList>
            <person name="Brettin T.S."/>
            <person name="Bruce D."/>
            <person name="Challacombe J.F."/>
            <person name="Gilna P."/>
            <person name="Han C."/>
            <person name="Hill K."/>
            <person name="Hitchcock P."/>
            <person name="Jackson P."/>
            <person name="Keim P."/>
            <person name="Longmire J."/>
            <person name="Lucas S."/>
            <person name="Okinaka R."/>
            <person name="Richardson P."/>
            <person name="Rubin E."/>
            <person name="Tice H."/>
        </authorList>
    </citation>
    <scope>NUCLEOTIDE SEQUENCE [LARGE SCALE GENOMIC DNA]</scope>
    <source>
        <strain>Sterne</strain>
    </source>
</reference>
<feature type="chain" id="PRO_0000090174" description="Triosephosphate isomerase">
    <location>
        <begin position="1"/>
        <end position="251"/>
    </location>
</feature>
<feature type="active site" description="Electrophile" evidence="1">
    <location>
        <position position="95"/>
    </location>
</feature>
<feature type="active site" description="Proton acceptor" evidence="1">
    <location>
        <position position="167"/>
    </location>
</feature>
<feature type="binding site" evidence="1">
    <location>
        <begin position="9"/>
        <end position="11"/>
    </location>
    <ligand>
        <name>substrate</name>
    </ligand>
</feature>
<feature type="binding site" evidence="1">
    <location>
        <position position="173"/>
    </location>
    <ligand>
        <name>substrate</name>
    </ligand>
</feature>
<feature type="binding site" evidence="1">
    <location>
        <position position="213"/>
    </location>
    <ligand>
        <name>substrate</name>
    </ligand>
</feature>
<feature type="binding site" evidence="1">
    <location>
        <begin position="234"/>
        <end position="235"/>
    </location>
    <ligand>
        <name>substrate</name>
    </ligand>
</feature>
<feature type="modified residue" description="Phosphoserine" evidence="1">
    <location>
        <position position="213"/>
    </location>
</feature>
<keyword id="KW-0963">Cytoplasm</keyword>
<keyword id="KW-0312">Gluconeogenesis</keyword>
<keyword id="KW-0324">Glycolysis</keyword>
<keyword id="KW-0413">Isomerase</keyword>
<keyword id="KW-0597">Phosphoprotein</keyword>
<keyword id="KW-1185">Reference proteome</keyword>
<gene>
    <name evidence="1" type="primary">tpiA</name>
    <name type="synonym">tpi</name>
    <name type="ordered locus">BA_5366</name>
    <name type="ordered locus">GBAA_5366</name>
    <name type="ordered locus">BAS4987</name>
</gene>